<gene>
    <name evidence="1" type="primary">fluC</name>
    <name evidence="1" type="synonym">crcB</name>
    <name type="ordered locus">ABSDF3122</name>
</gene>
<dbReference type="EMBL" id="CU468230">
    <property type="protein sequence ID" value="CAP02402.1"/>
    <property type="molecule type" value="Genomic_DNA"/>
</dbReference>
<dbReference type="SMR" id="B0VLD4"/>
<dbReference type="KEGG" id="abm:ABSDF3122"/>
<dbReference type="HOGENOM" id="CLU_114342_3_3_6"/>
<dbReference type="Proteomes" id="UP000001741">
    <property type="component" value="Chromosome"/>
</dbReference>
<dbReference type="GO" id="GO:0005886">
    <property type="term" value="C:plasma membrane"/>
    <property type="evidence" value="ECO:0007669"/>
    <property type="project" value="UniProtKB-SubCell"/>
</dbReference>
<dbReference type="GO" id="GO:0062054">
    <property type="term" value="F:fluoride channel activity"/>
    <property type="evidence" value="ECO:0007669"/>
    <property type="project" value="UniProtKB-UniRule"/>
</dbReference>
<dbReference type="GO" id="GO:0046872">
    <property type="term" value="F:metal ion binding"/>
    <property type="evidence" value="ECO:0007669"/>
    <property type="project" value="UniProtKB-KW"/>
</dbReference>
<dbReference type="GO" id="GO:0140114">
    <property type="term" value="P:cellular detoxification of fluoride"/>
    <property type="evidence" value="ECO:0007669"/>
    <property type="project" value="UniProtKB-UniRule"/>
</dbReference>
<dbReference type="HAMAP" id="MF_00454">
    <property type="entry name" value="FluC"/>
    <property type="match status" value="1"/>
</dbReference>
<dbReference type="InterPro" id="IPR003691">
    <property type="entry name" value="FluC"/>
</dbReference>
<dbReference type="NCBIfam" id="TIGR00494">
    <property type="entry name" value="crcB"/>
    <property type="match status" value="1"/>
</dbReference>
<dbReference type="NCBIfam" id="NF010792">
    <property type="entry name" value="PRK14196.1"/>
    <property type="match status" value="1"/>
</dbReference>
<dbReference type="PANTHER" id="PTHR28259">
    <property type="entry name" value="FLUORIDE EXPORT PROTEIN 1-RELATED"/>
    <property type="match status" value="1"/>
</dbReference>
<dbReference type="PANTHER" id="PTHR28259:SF1">
    <property type="entry name" value="FLUORIDE EXPORT PROTEIN 1-RELATED"/>
    <property type="match status" value="1"/>
</dbReference>
<dbReference type="Pfam" id="PF02537">
    <property type="entry name" value="CRCB"/>
    <property type="match status" value="1"/>
</dbReference>
<protein>
    <recommendedName>
        <fullName evidence="1">Fluoride-specific ion channel FluC</fullName>
    </recommendedName>
</protein>
<accession>B0VLD4</accession>
<keyword id="KW-0997">Cell inner membrane</keyword>
<keyword id="KW-1003">Cell membrane</keyword>
<keyword id="KW-0407">Ion channel</keyword>
<keyword id="KW-0406">Ion transport</keyword>
<keyword id="KW-0472">Membrane</keyword>
<keyword id="KW-0479">Metal-binding</keyword>
<keyword id="KW-0915">Sodium</keyword>
<keyword id="KW-0812">Transmembrane</keyword>
<keyword id="KW-1133">Transmembrane helix</keyword>
<keyword id="KW-0813">Transport</keyword>
<evidence type="ECO:0000255" key="1">
    <source>
        <dbReference type="HAMAP-Rule" id="MF_00454"/>
    </source>
</evidence>
<sequence>MYYPLLSIALGSVLGAWLRWFLGLKLNPIYPQIPLGTVTVNLVGGFIIGFAMAYFAHSDLSPNYKLFVITGFCGALTTFSTFSIEIVTLLQSGKWGMAMLAISIHLIGSLIFTCLGLATYYWVAGH</sequence>
<proteinExistence type="inferred from homology"/>
<reference key="1">
    <citation type="journal article" date="2008" name="PLoS ONE">
        <title>Comparative analysis of Acinetobacters: three genomes for three lifestyles.</title>
        <authorList>
            <person name="Vallenet D."/>
            <person name="Nordmann P."/>
            <person name="Barbe V."/>
            <person name="Poirel L."/>
            <person name="Mangenot S."/>
            <person name="Bataille E."/>
            <person name="Dossat C."/>
            <person name="Gas S."/>
            <person name="Kreimeyer A."/>
            <person name="Lenoble P."/>
            <person name="Oztas S."/>
            <person name="Poulain J."/>
            <person name="Segurens B."/>
            <person name="Robert C."/>
            <person name="Abergel C."/>
            <person name="Claverie J.-M."/>
            <person name="Raoult D."/>
            <person name="Medigue C."/>
            <person name="Weissenbach J."/>
            <person name="Cruveiller S."/>
        </authorList>
    </citation>
    <scope>NUCLEOTIDE SEQUENCE [LARGE SCALE GENOMIC DNA]</scope>
    <source>
        <strain>SDF</strain>
    </source>
</reference>
<name>FLUC_ACIBS</name>
<organism>
    <name type="scientific">Acinetobacter baumannii (strain SDF)</name>
    <dbReference type="NCBI Taxonomy" id="509170"/>
    <lineage>
        <taxon>Bacteria</taxon>
        <taxon>Pseudomonadati</taxon>
        <taxon>Pseudomonadota</taxon>
        <taxon>Gammaproteobacteria</taxon>
        <taxon>Moraxellales</taxon>
        <taxon>Moraxellaceae</taxon>
        <taxon>Acinetobacter</taxon>
        <taxon>Acinetobacter calcoaceticus/baumannii complex</taxon>
    </lineage>
</organism>
<feature type="chain" id="PRO_1000189705" description="Fluoride-specific ion channel FluC">
    <location>
        <begin position="1"/>
        <end position="126"/>
    </location>
</feature>
<feature type="transmembrane region" description="Helical" evidence="1">
    <location>
        <begin position="4"/>
        <end position="24"/>
    </location>
</feature>
<feature type="transmembrane region" description="Helical" evidence="1">
    <location>
        <begin position="33"/>
        <end position="53"/>
    </location>
</feature>
<feature type="transmembrane region" description="Helical" evidence="1">
    <location>
        <begin position="67"/>
        <end position="87"/>
    </location>
</feature>
<feature type="transmembrane region" description="Helical" evidence="1">
    <location>
        <begin position="97"/>
        <end position="117"/>
    </location>
</feature>
<feature type="binding site" evidence="1">
    <location>
        <position position="74"/>
    </location>
    <ligand>
        <name>Na(+)</name>
        <dbReference type="ChEBI" id="CHEBI:29101"/>
        <note>structural</note>
    </ligand>
</feature>
<feature type="binding site" evidence="1">
    <location>
        <position position="77"/>
    </location>
    <ligand>
        <name>Na(+)</name>
        <dbReference type="ChEBI" id="CHEBI:29101"/>
        <note>structural</note>
    </ligand>
</feature>
<comment type="function">
    <text evidence="1">Fluoride-specific ion channel. Important for reducing fluoride concentration in the cell, thus reducing its toxicity.</text>
</comment>
<comment type="catalytic activity">
    <reaction evidence="1">
        <text>fluoride(in) = fluoride(out)</text>
        <dbReference type="Rhea" id="RHEA:76159"/>
        <dbReference type="ChEBI" id="CHEBI:17051"/>
    </reaction>
    <physiologicalReaction direction="left-to-right" evidence="1">
        <dbReference type="Rhea" id="RHEA:76160"/>
    </physiologicalReaction>
</comment>
<comment type="activity regulation">
    <text evidence="1">Na(+) is not transported, but it plays an essential structural role and its presence is essential for fluoride channel function.</text>
</comment>
<comment type="subcellular location">
    <subcellularLocation>
        <location evidence="1">Cell inner membrane</location>
        <topology evidence="1">Multi-pass membrane protein</topology>
    </subcellularLocation>
</comment>
<comment type="similarity">
    <text evidence="1">Belongs to the fluoride channel Fluc/FEX (TC 1.A.43) family.</text>
</comment>